<dbReference type="EC" id="2.1.2.1" evidence="1"/>
<dbReference type="EMBL" id="AP006628">
    <property type="protein sequence ID" value="BAD04266.1"/>
    <property type="molecule type" value="Genomic_DNA"/>
</dbReference>
<dbReference type="SMR" id="Q6YR37"/>
<dbReference type="STRING" id="262768.PAM_181"/>
<dbReference type="KEGG" id="poy:PAM_181"/>
<dbReference type="eggNOG" id="COG0112">
    <property type="taxonomic scope" value="Bacteria"/>
</dbReference>
<dbReference type="HOGENOM" id="CLU_022477_2_1_14"/>
<dbReference type="BioCyc" id="OYEL262768:G1G26-222-MONOMER"/>
<dbReference type="UniPathway" id="UPA00193"/>
<dbReference type="UniPathway" id="UPA00288">
    <property type="reaction ID" value="UER01023"/>
</dbReference>
<dbReference type="Proteomes" id="UP000002523">
    <property type="component" value="Chromosome"/>
</dbReference>
<dbReference type="GO" id="GO:0005829">
    <property type="term" value="C:cytosol"/>
    <property type="evidence" value="ECO:0007669"/>
    <property type="project" value="TreeGrafter"/>
</dbReference>
<dbReference type="GO" id="GO:0004372">
    <property type="term" value="F:glycine hydroxymethyltransferase activity"/>
    <property type="evidence" value="ECO:0007669"/>
    <property type="project" value="UniProtKB-UniRule"/>
</dbReference>
<dbReference type="GO" id="GO:0030170">
    <property type="term" value="F:pyridoxal phosphate binding"/>
    <property type="evidence" value="ECO:0007669"/>
    <property type="project" value="UniProtKB-UniRule"/>
</dbReference>
<dbReference type="GO" id="GO:0019264">
    <property type="term" value="P:glycine biosynthetic process from serine"/>
    <property type="evidence" value="ECO:0007669"/>
    <property type="project" value="UniProtKB-UniRule"/>
</dbReference>
<dbReference type="GO" id="GO:0035999">
    <property type="term" value="P:tetrahydrofolate interconversion"/>
    <property type="evidence" value="ECO:0007669"/>
    <property type="project" value="UniProtKB-UniRule"/>
</dbReference>
<dbReference type="CDD" id="cd00378">
    <property type="entry name" value="SHMT"/>
    <property type="match status" value="1"/>
</dbReference>
<dbReference type="FunFam" id="3.40.640.10:FF:000001">
    <property type="entry name" value="Serine hydroxymethyltransferase"/>
    <property type="match status" value="1"/>
</dbReference>
<dbReference type="Gene3D" id="3.90.1150.10">
    <property type="entry name" value="Aspartate Aminotransferase, domain 1"/>
    <property type="match status" value="1"/>
</dbReference>
<dbReference type="Gene3D" id="3.40.640.10">
    <property type="entry name" value="Type I PLP-dependent aspartate aminotransferase-like (Major domain)"/>
    <property type="match status" value="1"/>
</dbReference>
<dbReference type="HAMAP" id="MF_00051">
    <property type="entry name" value="SHMT"/>
    <property type="match status" value="1"/>
</dbReference>
<dbReference type="InterPro" id="IPR015424">
    <property type="entry name" value="PyrdxlP-dep_Trfase"/>
</dbReference>
<dbReference type="InterPro" id="IPR015421">
    <property type="entry name" value="PyrdxlP-dep_Trfase_major"/>
</dbReference>
<dbReference type="InterPro" id="IPR015422">
    <property type="entry name" value="PyrdxlP-dep_Trfase_small"/>
</dbReference>
<dbReference type="InterPro" id="IPR001085">
    <property type="entry name" value="Ser_HO-MeTrfase"/>
</dbReference>
<dbReference type="InterPro" id="IPR049943">
    <property type="entry name" value="Ser_HO-MeTrfase-like"/>
</dbReference>
<dbReference type="InterPro" id="IPR019798">
    <property type="entry name" value="Ser_HO-MeTrfase_PLP_BS"/>
</dbReference>
<dbReference type="InterPro" id="IPR039429">
    <property type="entry name" value="SHMT-like_dom"/>
</dbReference>
<dbReference type="NCBIfam" id="NF000586">
    <property type="entry name" value="PRK00011.1"/>
    <property type="match status" value="1"/>
</dbReference>
<dbReference type="PANTHER" id="PTHR11680">
    <property type="entry name" value="SERINE HYDROXYMETHYLTRANSFERASE"/>
    <property type="match status" value="1"/>
</dbReference>
<dbReference type="PANTHER" id="PTHR11680:SF35">
    <property type="entry name" value="SERINE HYDROXYMETHYLTRANSFERASE 1"/>
    <property type="match status" value="1"/>
</dbReference>
<dbReference type="Pfam" id="PF00464">
    <property type="entry name" value="SHMT"/>
    <property type="match status" value="1"/>
</dbReference>
<dbReference type="PIRSF" id="PIRSF000412">
    <property type="entry name" value="SHMT"/>
    <property type="match status" value="1"/>
</dbReference>
<dbReference type="SUPFAM" id="SSF53383">
    <property type="entry name" value="PLP-dependent transferases"/>
    <property type="match status" value="1"/>
</dbReference>
<dbReference type="PROSITE" id="PS00096">
    <property type="entry name" value="SHMT"/>
    <property type="match status" value="1"/>
</dbReference>
<reference key="1">
    <citation type="journal article" date="2004" name="Nat. Genet.">
        <title>Reductive evolution suggested from the complete genome sequence of a plant-pathogenic phytoplasma.</title>
        <authorList>
            <person name="Oshima K."/>
            <person name="Kakizawa S."/>
            <person name="Nishigawa H."/>
            <person name="Jung H.-Y."/>
            <person name="Wei W."/>
            <person name="Suzuki S."/>
            <person name="Arashida R."/>
            <person name="Nakata D."/>
            <person name="Miyata S."/>
            <person name="Ugaki M."/>
            <person name="Namba S."/>
        </authorList>
    </citation>
    <scope>NUCLEOTIDE SEQUENCE [LARGE SCALE GENOMIC DNA]</scope>
    <source>
        <strain>OY-M</strain>
    </source>
</reference>
<protein>
    <recommendedName>
        <fullName evidence="1">Serine hydroxymethyltransferase</fullName>
        <shortName evidence="1">SHMT</shortName>
        <shortName evidence="1">Serine methylase</shortName>
        <ecNumber evidence="1">2.1.2.1</ecNumber>
    </recommendedName>
</protein>
<gene>
    <name evidence="1" type="primary">glyA</name>
    <name type="ordered locus">PAM_181</name>
</gene>
<accession>Q6YR37</accession>
<keyword id="KW-0028">Amino-acid biosynthesis</keyword>
<keyword id="KW-0963">Cytoplasm</keyword>
<keyword id="KW-0554">One-carbon metabolism</keyword>
<keyword id="KW-0663">Pyridoxal phosphate</keyword>
<keyword id="KW-0808">Transferase</keyword>
<proteinExistence type="inferred from homology"/>
<organism>
    <name type="scientific">Onion yellows phytoplasma (strain OY-M)</name>
    <dbReference type="NCBI Taxonomy" id="262768"/>
    <lineage>
        <taxon>Bacteria</taxon>
        <taxon>Bacillati</taxon>
        <taxon>Mycoplasmatota</taxon>
        <taxon>Mollicutes</taxon>
        <taxon>Acholeplasmatales</taxon>
        <taxon>Acholeplasmataceae</taxon>
        <taxon>Candidatus Phytoplasma</taxon>
        <taxon>16SrI (Aster yellows group)</taxon>
    </lineage>
</organism>
<name>GLYA_ONYPE</name>
<sequence length="416" mass="46327">MNQKLGLKDQDQEIFDLIEQEKIRQKENILLIASENFVSQAVLDAQGSILTNKYAEGYPQARYYNGCKNVDQIEKIAIQRATKLFGAKYANVQPHSGSQANMGAFQALLKPGDKILGLSLMDGGHLTHGHKLSFSGGFYEAHFYNVHPQTEMLDYDEIRKVALKVKPKLIIAGYSAYSKTINFKKFRQIADEVNAYLMADIAHIAGLVACGLHPCPFEANADVVTSTMHKTLRGPRGGLILTNKEEVFKKINRGIFPGIQGGPCIHTIAAKAVAFQEAMMPSFKEYQKQVIKNANTFAKAFQQKGYRIVSGGTDNHLFLIDVKHKNPEFTGSKIANMLEKINIVVNKNTIPFDQEKPFVTSGIRIGTPAMTTVGFRENDFILVADLMDKAINHLDDESYLAQIKQQVLALLSKFNK</sequence>
<evidence type="ECO:0000255" key="1">
    <source>
        <dbReference type="HAMAP-Rule" id="MF_00051"/>
    </source>
</evidence>
<comment type="function">
    <text evidence="1">Catalyzes the reversible interconversion of serine and glycine with tetrahydrofolate (THF) serving as the one-carbon carrier. This reaction serves as the major source of one-carbon groups required for the biosynthesis of purines, thymidylate, methionine, and other important biomolecules. Also exhibits THF-independent aldolase activity toward beta-hydroxyamino acids, producing glycine and aldehydes, via a retro-aldol mechanism.</text>
</comment>
<comment type="catalytic activity">
    <reaction evidence="1">
        <text>(6R)-5,10-methylene-5,6,7,8-tetrahydrofolate + glycine + H2O = (6S)-5,6,7,8-tetrahydrofolate + L-serine</text>
        <dbReference type="Rhea" id="RHEA:15481"/>
        <dbReference type="ChEBI" id="CHEBI:15377"/>
        <dbReference type="ChEBI" id="CHEBI:15636"/>
        <dbReference type="ChEBI" id="CHEBI:33384"/>
        <dbReference type="ChEBI" id="CHEBI:57305"/>
        <dbReference type="ChEBI" id="CHEBI:57453"/>
        <dbReference type="EC" id="2.1.2.1"/>
    </reaction>
</comment>
<comment type="cofactor">
    <cofactor evidence="1">
        <name>pyridoxal 5'-phosphate</name>
        <dbReference type="ChEBI" id="CHEBI:597326"/>
    </cofactor>
</comment>
<comment type="pathway">
    <text evidence="1">One-carbon metabolism; tetrahydrofolate interconversion.</text>
</comment>
<comment type="pathway">
    <text evidence="1">Amino-acid biosynthesis; glycine biosynthesis; glycine from L-serine: step 1/1.</text>
</comment>
<comment type="subunit">
    <text evidence="1">Homodimer.</text>
</comment>
<comment type="subcellular location">
    <subcellularLocation>
        <location evidence="1">Cytoplasm</location>
    </subcellularLocation>
</comment>
<comment type="similarity">
    <text evidence="1">Belongs to the SHMT family.</text>
</comment>
<feature type="chain" id="PRO_0000113628" description="Serine hydroxymethyltransferase">
    <location>
        <begin position="1"/>
        <end position="416"/>
    </location>
</feature>
<feature type="binding site" evidence="1">
    <location>
        <position position="120"/>
    </location>
    <ligand>
        <name>(6S)-5,6,7,8-tetrahydrofolate</name>
        <dbReference type="ChEBI" id="CHEBI:57453"/>
    </ligand>
</feature>
<feature type="binding site" evidence="1">
    <location>
        <begin position="124"/>
        <end position="126"/>
    </location>
    <ligand>
        <name>(6S)-5,6,7,8-tetrahydrofolate</name>
        <dbReference type="ChEBI" id="CHEBI:57453"/>
    </ligand>
</feature>
<feature type="binding site" evidence="1">
    <location>
        <position position="246"/>
    </location>
    <ligand>
        <name>(6S)-5,6,7,8-tetrahydrofolate</name>
        <dbReference type="ChEBI" id="CHEBI:57453"/>
    </ligand>
</feature>
<feature type="site" description="Plays an important role in substrate specificity" evidence="1">
    <location>
        <position position="229"/>
    </location>
</feature>
<feature type="modified residue" description="N6-(pyridoxal phosphate)lysine" evidence="1">
    <location>
        <position position="230"/>
    </location>
</feature>